<dbReference type="EMBL" id="AK017472">
    <property type="protein sequence ID" value="BAB30759.1"/>
    <property type="status" value="ALT_INIT"/>
    <property type="molecule type" value="mRNA"/>
</dbReference>
<dbReference type="EMBL" id="AK032807">
    <property type="protein sequence ID" value="BAC28032.1"/>
    <property type="molecule type" value="mRNA"/>
</dbReference>
<dbReference type="EMBL" id="AK048519">
    <property type="protein sequence ID" value="BAC33356.1"/>
    <property type="molecule type" value="mRNA"/>
</dbReference>
<dbReference type="EMBL" id="BC098483">
    <property type="protein sequence ID" value="AAH98483.1"/>
    <property type="status" value="ALT_SEQ"/>
    <property type="molecule type" value="mRNA"/>
</dbReference>
<dbReference type="EMBL" id="BC132497">
    <property type="protein sequence ID" value="AAI32498.1"/>
    <property type="molecule type" value="mRNA"/>
</dbReference>
<dbReference type="CCDS" id="CCDS53203.1">
    <molecule id="Q8BMD7-2"/>
</dbReference>
<dbReference type="CCDS" id="CCDS57777.1">
    <molecule id="Q8BMD7-1"/>
</dbReference>
<dbReference type="RefSeq" id="NP_001180238.1">
    <molecule id="Q8BMD7-1"/>
    <property type="nucleotide sequence ID" value="NM_001193309.1"/>
</dbReference>
<dbReference type="RefSeq" id="NP_083689.2">
    <molecule id="Q8BMD7-2"/>
    <property type="nucleotide sequence ID" value="NM_029413.4"/>
</dbReference>
<dbReference type="SMR" id="Q8BMD7"/>
<dbReference type="FunCoup" id="Q8BMD7">
    <property type="interactions" value="934"/>
</dbReference>
<dbReference type="STRING" id="10090.ENSMUSP00000084663"/>
<dbReference type="GlyGen" id="Q8BMD7">
    <property type="glycosylation" value="1 site"/>
</dbReference>
<dbReference type="iPTMnet" id="Q8BMD7"/>
<dbReference type="PhosphoSitePlus" id="Q8BMD7"/>
<dbReference type="PaxDb" id="10090-ENSMUSP00000033811"/>
<dbReference type="ProteomicsDB" id="291381">
    <molecule id="Q8BMD7-1"/>
</dbReference>
<dbReference type="ProteomicsDB" id="291382">
    <molecule id="Q8BMD7-2"/>
</dbReference>
<dbReference type="Antibodypedia" id="386">
    <property type="antibodies" value="26 antibodies from 10 providers"/>
</dbReference>
<dbReference type="Ensembl" id="ENSMUST00000033811.14">
    <molecule id="Q8BMD7-2"/>
    <property type="protein sequence ID" value="ENSMUSP00000033811.8"/>
    <property type="gene ID" value="ENSMUSG00000031434.16"/>
</dbReference>
<dbReference type="Ensembl" id="ENSMUST00000087401.12">
    <molecule id="Q8BMD7-1"/>
    <property type="protein sequence ID" value="ENSMUSP00000084663.6"/>
    <property type="gene ID" value="ENSMUSG00000031434.16"/>
</dbReference>
<dbReference type="GeneID" id="75746"/>
<dbReference type="KEGG" id="mmu:75746"/>
<dbReference type="UCSC" id="uc009ukn.2">
    <molecule id="Q8BMD7-1"/>
    <property type="organism name" value="mouse"/>
</dbReference>
<dbReference type="UCSC" id="uc009uko.2">
    <molecule id="Q8BMD7-2"/>
    <property type="organism name" value="mouse"/>
</dbReference>
<dbReference type="AGR" id="MGI:1922996"/>
<dbReference type="CTD" id="79710"/>
<dbReference type="MGI" id="MGI:1922996">
    <property type="gene designation" value="Morc4"/>
</dbReference>
<dbReference type="VEuPathDB" id="HostDB:ENSMUSG00000031434"/>
<dbReference type="eggNOG" id="KOG1845">
    <property type="taxonomic scope" value="Eukaryota"/>
</dbReference>
<dbReference type="GeneTree" id="ENSGT00940000161221"/>
<dbReference type="HOGENOM" id="CLU_011516_3_0_1"/>
<dbReference type="InParanoid" id="Q8BMD7"/>
<dbReference type="OMA" id="YKWIVGE"/>
<dbReference type="OrthoDB" id="757982at2759"/>
<dbReference type="PhylomeDB" id="Q8BMD7"/>
<dbReference type="TreeFam" id="TF329118"/>
<dbReference type="BioGRID-ORCS" id="75746">
    <property type="hits" value="3 hits in 80 CRISPR screens"/>
</dbReference>
<dbReference type="ChiTaRS" id="Morc4">
    <property type="organism name" value="mouse"/>
</dbReference>
<dbReference type="PRO" id="PR:Q8BMD7"/>
<dbReference type="Proteomes" id="UP000000589">
    <property type="component" value="Chromosome X"/>
</dbReference>
<dbReference type="RNAct" id="Q8BMD7">
    <property type="molecule type" value="protein"/>
</dbReference>
<dbReference type="Bgee" id="ENSMUSG00000031434">
    <property type="expression patterns" value="Expressed in yolk sac and 209 other cell types or tissues"/>
</dbReference>
<dbReference type="ExpressionAtlas" id="Q8BMD7">
    <property type="expression patterns" value="baseline and differential"/>
</dbReference>
<dbReference type="GO" id="GO:0005654">
    <property type="term" value="C:nucleoplasm"/>
    <property type="evidence" value="ECO:0007669"/>
    <property type="project" value="Ensembl"/>
</dbReference>
<dbReference type="GO" id="GO:0016887">
    <property type="term" value="F:ATP hydrolysis activity"/>
    <property type="evidence" value="ECO:0007669"/>
    <property type="project" value="InterPro"/>
</dbReference>
<dbReference type="GO" id="GO:0035064">
    <property type="term" value="F:methylated histone binding"/>
    <property type="evidence" value="ECO:0007669"/>
    <property type="project" value="Ensembl"/>
</dbReference>
<dbReference type="GO" id="GO:0008270">
    <property type="term" value="F:zinc ion binding"/>
    <property type="evidence" value="ECO:0007669"/>
    <property type="project" value="UniProtKB-KW"/>
</dbReference>
<dbReference type="FunFam" id="3.30.40.100:FF:000003">
    <property type="entry name" value="MORC family CW-type zinc finger 3"/>
    <property type="match status" value="1"/>
</dbReference>
<dbReference type="FunFam" id="3.30.565.10:FF:000035">
    <property type="entry name" value="MORC family CW-type zinc finger protein 4"/>
    <property type="match status" value="1"/>
</dbReference>
<dbReference type="Gene3D" id="3.30.40.100">
    <property type="match status" value="1"/>
</dbReference>
<dbReference type="Gene3D" id="3.30.565.10">
    <property type="entry name" value="Histidine kinase-like ATPase, C-terminal domain"/>
    <property type="match status" value="1"/>
</dbReference>
<dbReference type="InterPro" id="IPR036890">
    <property type="entry name" value="HATPase_C_sf"/>
</dbReference>
<dbReference type="InterPro" id="IPR045261">
    <property type="entry name" value="MORC_ATPase"/>
</dbReference>
<dbReference type="InterPro" id="IPR041006">
    <property type="entry name" value="Morc_S5"/>
</dbReference>
<dbReference type="InterPro" id="IPR011124">
    <property type="entry name" value="Znf_CW"/>
</dbReference>
<dbReference type="PANTHER" id="PTHR23336:SF22">
    <property type="entry name" value="MORC FAMILY CW-TYPE ZINC FINGER PROTEIN 4"/>
    <property type="match status" value="1"/>
</dbReference>
<dbReference type="PANTHER" id="PTHR23336">
    <property type="entry name" value="ZINC FINGER CW-TYPE COILED-COIL DOMAIN PROTEIN 3"/>
    <property type="match status" value="1"/>
</dbReference>
<dbReference type="Pfam" id="PF13589">
    <property type="entry name" value="HATPase_c_3"/>
    <property type="match status" value="1"/>
</dbReference>
<dbReference type="Pfam" id="PF17942">
    <property type="entry name" value="Morc6_S5"/>
    <property type="match status" value="1"/>
</dbReference>
<dbReference type="Pfam" id="PF07496">
    <property type="entry name" value="zf-CW"/>
    <property type="match status" value="1"/>
</dbReference>
<dbReference type="SUPFAM" id="SSF55874">
    <property type="entry name" value="ATPase domain of HSP90 chaperone/DNA topoisomerase II/histidine kinase"/>
    <property type="match status" value="1"/>
</dbReference>
<dbReference type="PROSITE" id="PS51050">
    <property type="entry name" value="ZF_CW"/>
    <property type="match status" value="1"/>
</dbReference>
<reference key="1">
    <citation type="journal article" date="2005" name="Science">
        <title>The transcriptional landscape of the mammalian genome.</title>
        <authorList>
            <person name="Carninci P."/>
            <person name="Kasukawa T."/>
            <person name="Katayama S."/>
            <person name="Gough J."/>
            <person name="Frith M.C."/>
            <person name="Maeda N."/>
            <person name="Oyama R."/>
            <person name="Ravasi T."/>
            <person name="Lenhard B."/>
            <person name="Wells C."/>
            <person name="Kodzius R."/>
            <person name="Shimokawa K."/>
            <person name="Bajic V.B."/>
            <person name="Brenner S.E."/>
            <person name="Batalov S."/>
            <person name="Forrest A.R."/>
            <person name="Zavolan M."/>
            <person name="Davis M.J."/>
            <person name="Wilming L.G."/>
            <person name="Aidinis V."/>
            <person name="Allen J.E."/>
            <person name="Ambesi-Impiombato A."/>
            <person name="Apweiler R."/>
            <person name="Aturaliya R.N."/>
            <person name="Bailey T.L."/>
            <person name="Bansal M."/>
            <person name="Baxter L."/>
            <person name="Beisel K.W."/>
            <person name="Bersano T."/>
            <person name="Bono H."/>
            <person name="Chalk A.M."/>
            <person name="Chiu K.P."/>
            <person name="Choudhary V."/>
            <person name="Christoffels A."/>
            <person name="Clutterbuck D.R."/>
            <person name="Crowe M.L."/>
            <person name="Dalla E."/>
            <person name="Dalrymple B.P."/>
            <person name="de Bono B."/>
            <person name="Della Gatta G."/>
            <person name="di Bernardo D."/>
            <person name="Down T."/>
            <person name="Engstrom P."/>
            <person name="Fagiolini M."/>
            <person name="Faulkner G."/>
            <person name="Fletcher C.F."/>
            <person name="Fukushima T."/>
            <person name="Furuno M."/>
            <person name="Futaki S."/>
            <person name="Gariboldi M."/>
            <person name="Georgii-Hemming P."/>
            <person name="Gingeras T.R."/>
            <person name="Gojobori T."/>
            <person name="Green R.E."/>
            <person name="Gustincich S."/>
            <person name="Harbers M."/>
            <person name="Hayashi Y."/>
            <person name="Hensch T.K."/>
            <person name="Hirokawa N."/>
            <person name="Hill D."/>
            <person name="Huminiecki L."/>
            <person name="Iacono M."/>
            <person name="Ikeo K."/>
            <person name="Iwama A."/>
            <person name="Ishikawa T."/>
            <person name="Jakt M."/>
            <person name="Kanapin A."/>
            <person name="Katoh M."/>
            <person name="Kawasawa Y."/>
            <person name="Kelso J."/>
            <person name="Kitamura H."/>
            <person name="Kitano H."/>
            <person name="Kollias G."/>
            <person name="Krishnan S.P."/>
            <person name="Kruger A."/>
            <person name="Kummerfeld S.K."/>
            <person name="Kurochkin I.V."/>
            <person name="Lareau L.F."/>
            <person name="Lazarevic D."/>
            <person name="Lipovich L."/>
            <person name="Liu J."/>
            <person name="Liuni S."/>
            <person name="McWilliam S."/>
            <person name="Madan Babu M."/>
            <person name="Madera M."/>
            <person name="Marchionni L."/>
            <person name="Matsuda H."/>
            <person name="Matsuzawa S."/>
            <person name="Miki H."/>
            <person name="Mignone F."/>
            <person name="Miyake S."/>
            <person name="Morris K."/>
            <person name="Mottagui-Tabar S."/>
            <person name="Mulder N."/>
            <person name="Nakano N."/>
            <person name="Nakauchi H."/>
            <person name="Ng P."/>
            <person name="Nilsson R."/>
            <person name="Nishiguchi S."/>
            <person name="Nishikawa S."/>
            <person name="Nori F."/>
            <person name="Ohara O."/>
            <person name="Okazaki Y."/>
            <person name="Orlando V."/>
            <person name="Pang K.C."/>
            <person name="Pavan W.J."/>
            <person name="Pavesi G."/>
            <person name="Pesole G."/>
            <person name="Petrovsky N."/>
            <person name="Piazza S."/>
            <person name="Reed J."/>
            <person name="Reid J.F."/>
            <person name="Ring B.Z."/>
            <person name="Ringwald M."/>
            <person name="Rost B."/>
            <person name="Ruan Y."/>
            <person name="Salzberg S.L."/>
            <person name="Sandelin A."/>
            <person name="Schneider C."/>
            <person name="Schoenbach C."/>
            <person name="Sekiguchi K."/>
            <person name="Semple C.A."/>
            <person name="Seno S."/>
            <person name="Sessa L."/>
            <person name="Sheng Y."/>
            <person name="Shibata Y."/>
            <person name="Shimada H."/>
            <person name="Shimada K."/>
            <person name="Silva D."/>
            <person name="Sinclair B."/>
            <person name="Sperling S."/>
            <person name="Stupka E."/>
            <person name="Sugiura K."/>
            <person name="Sultana R."/>
            <person name="Takenaka Y."/>
            <person name="Taki K."/>
            <person name="Tammoja K."/>
            <person name="Tan S.L."/>
            <person name="Tang S."/>
            <person name="Taylor M.S."/>
            <person name="Tegner J."/>
            <person name="Teichmann S.A."/>
            <person name="Ueda H.R."/>
            <person name="van Nimwegen E."/>
            <person name="Verardo R."/>
            <person name="Wei C.L."/>
            <person name="Yagi K."/>
            <person name="Yamanishi H."/>
            <person name="Zabarovsky E."/>
            <person name="Zhu S."/>
            <person name="Zimmer A."/>
            <person name="Hide W."/>
            <person name="Bult C."/>
            <person name="Grimmond S.M."/>
            <person name="Teasdale R.D."/>
            <person name="Liu E.T."/>
            <person name="Brusic V."/>
            <person name="Quackenbush J."/>
            <person name="Wahlestedt C."/>
            <person name="Mattick J.S."/>
            <person name="Hume D.A."/>
            <person name="Kai C."/>
            <person name="Sasaki D."/>
            <person name="Tomaru Y."/>
            <person name="Fukuda S."/>
            <person name="Kanamori-Katayama M."/>
            <person name="Suzuki M."/>
            <person name="Aoki J."/>
            <person name="Arakawa T."/>
            <person name="Iida J."/>
            <person name="Imamura K."/>
            <person name="Itoh M."/>
            <person name="Kato T."/>
            <person name="Kawaji H."/>
            <person name="Kawagashira N."/>
            <person name="Kawashima T."/>
            <person name="Kojima M."/>
            <person name="Kondo S."/>
            <person name="Konno H."/>
            <person name="Nakano K."/>
            <person name="Ninomiya N."/>
            <person name="Nishio T."/>
            <person name="Okada M."/>
            <person name="Plessy C."/>
            <person name="Shibata K."/>
            <person name="Shiraki T."/>
            <person name="Suzuki S."/>
            <person name="Tagami M."/>
            <person name="Waki K."/>
            <person name="Watahiki A."/>
            <person name="Okamura-Oho Y."/>
            <person name="Suzuki H."/>
            <person name="Kawai J."/>
            <person name="Hayashizaki Y."/>
        </authorList>
    </citation>
    <scope>NUCLEOTIDE SEQUENCE [LARGE SCALE MRNA] (ISOFORM 2)</scope>
    <scope>NUCLEOTIDE SEQUENCE [LARGE SCALE MRNA] OF 1-714 (ISOFORMS 1/2)</scope>
    <source>
        <strain>C57BL/6J</strain>
        <tissue>Embryo</tissue>
        <tissue>Head</tissue>
        <tissue>Wolffian duct</tissue>
    </source>
</reference>
<reference key="2">
    <citation type="journal article" date="2004" name="Genome Res.">
        <title>The status, quality, and expansion of the NIH full-length cDNA project: the Mammalian Gene Collection (MGC).</title>
        <authorList>
            <consortium name="The MGC Project Team"/>
        </authorList>
    </citation>
    <scope>NUCLEOTIDE SEQUENCE [LARGE SCALE MRNA] (ISOFORMS 1 AND 2)</scope>
    <source>
        <strain>B5/EGFP</strain>
        <tissue>Brain</tissue>
        <tissue>Trophoblast stem cell</tissue>
    </source>
</reference>
<feature type="chain" id="PRO_0000096540" description="MORC family CW-type zinc finger protein 4">
    <location>
        <begin position="1"/>
        <end position="928"/>
    </location>
</feature>
<feature type="zinc finger region" description="CW-type" evidence="3">
    <location>
        <begin position="417"/>
        <end position="469"/>
    </location>
</feature>
<feature type="region of interest" description="Disordered" evidence="4">
    <location>
        <begin position="474"/>
        <end position="510"/>
    </location>
</feature>
<feature type="region of interest" description="Disordered" evidence="4">
    <location>
        <begin position="527"/>
        <end position="546"/>
    </location>
</feature>
<feature type="region of interest" description="Disordered" evidence="4">
    <location>
        <begin position="599"/>
        <end position="649"/>
    </location>
</feature>
<feature type="region of interest" description="Disordered" evidence="4">
    <location>
        <begin position="718"/>
        <end position="766"/>
    </location>
</feature>
<feature type="coiled-coil region" evidence="2">
    <location>
        <begin position="758"/>
        <end position="867"/>
    </location>
</feature>
<feature type="compositionally biased region" description="Basic and acidic residues" evidence="4">
    <location>
        <begin position="485"/>
        <end position="497"/>
    </location>
</feature>
<feature type="compositionally biased region" description="Basic and acidic residues" evidence="4">
    <location>
        <begin position="626"/>
        <end position="636"/>
    </location>
</feature>
<feature type="compositionally biased region" description="Basic and acidic residues" evidence="4">
    <location>
        <begin position="739"/>
        <end position="748"/>
    </location>
</feature>
<feature type="compositionally biased region" description="Basic and acidic residues" evidence="4">
    <location>
        <begin position="756"/>
        <end position="766"/>
    </location>
</feature>
<feature type="binding site" evidence="3">
    <location>
        <position position="426"/>
    </location>
    <ligand>
        <name>Zn(2+)</name>
        <dbReference type="ChEBI" id="CHEBI:29105"/>
    </ligand>
</feature>
<feature type="binding site" evidence="3">
    <location>
        <position position="429"/>
    </location>
    <ligand>
        <name>Zn(2+)</name>
        <dbReference type="ChEBI" id="CHEBI:29105"/>
    </ligand>
</feature>
<feature type="binding site" evidence="3">
    <location>
        <position position="450"/>
    </location>
    <ligand>
        <name>Zn(2+)</name>
        <dbReference type="ChEBI" id="CHEBI:29105"/>
    </ligand>
</feature>
<feature type="binding site" evidence="3">
    <location>
        <position position="461"/>
    </location>
    <ligand>
        <name>Zn(2+)</name>
        <dbReference type="ChEBI" id="CHEBI:29105"/>
    </ligand>
</feature>
<feature type="splice variant" id="VSP_015277" description="In isoform 2." evidence="5 6">
    <original>ALARL</original>
    <variation>LITRV</variation>
    <location>
        <begin position="879"/>
        <end position="883"/>
    </location>
</feature>
<feature type="splice variant" id="VSP_015278" description="In isoform 2." evidence="5 6">
    <location>
        <begin position="884"/>
        <end position="928"/>
    </location>
</feature>
<feature type="sequence conflict" description="In Ref. 1; BAC28032." evidence="7" ref="1">
    <original>W</original>
    <variation>C</variation>
    <location>
        <position position="221"/>
    </location>
</feature>
<feature type="sequence conflict" description="In Ref. 1; BAB30759." evidence="7" ref="1">
    <original>F</original>
    <variation>Y</variation>
    <location>
        <position position="284"/>
    </location>
</feature>
<feature type="sequence conflict" description="In Ref. 2; AAH98483." evidence="7" ref="2">
    <original>K</original>
    <variation>E</variation>
    <location>
        <position position="342"/>
    </location>
</feature>
<feature type="sequence conflict" description="In Ref. 2; AAH98483." evidence="7" ref="2">
    <original>E</original>
    <variation>K</variation>
    <location>
        <position position="402"/>
    </location>
</feature>
<feature type="sequence conflict" description="In Ref. 2; AAH98483." evidence="7" ref="2">
    <original>L</original>
    <variation>S</variation>
    <location>
        <position position="412"/>
    </location>
</feature>
<feature type="sequence conflict" description="In Ref. 2; AAH98483." evidence="7" ref="2">
    <original>G</original>
    <variation>D</variation>
    <location>
        <position position="690"/>
    </location>
</feature>
<feature type="sequence conflict" description="In Ref. 2; AAH98483." evidence="7" ref="2">
    <original>C</original>
    <variation>R</variation>
    <location>
        <position position="743"/>
    </location>
</feature>
<feature type="sequence conflict" description="In Ref. 2; AAH98483." evidence="7" ref="2">
    <original>N</original>
    <variation>S</variation>
    <location>
        <position position="750"/>
    </location>
</feature>
<keyword id="KW-0025">Alternative splicing</keyword>
<keyword id="KW-0175">Coiled coil</keyword>
<keyword id="KW-0479">Metal-binding</keyword>
<keyword id="KW-0539">Nucleus</keyword>
<keyword id="KW-1185">Reference proteome</keyword>
<keyword id="KW-0862">Zinc</keyword>
<keyword id="KW-0863">Zinc-finger</keyword>
<proteinExistence type="evidence at transcript level"/>
<gene>
    <name type="primary">Morc4</name>
    <name type="synonym">Zcwcc2</name>
</gene>
<name>MORC4_MOUSE</name>
<accession>Q8BMD7</accession>
<accession>A2RTG5</accession>
<accession>Q4KMM6</accession>
<accession>Q8BX95</accession>
<accession>Q9CS96</accession>
<organism>
    <name type="scientific">Mus musculus</name>
    <name type="common">Mouse</name>
    <dbReference type="NCBI Taxonomy" id="10090"/>
    <lineage>
        <taxon>Eukaryota</taxon>
        <taxon>Metazoa</taxon>
        <taxon>Chordata</taxon>
        <taxon>Craniata</taxon>
        <taxon>Vertebrata</taxon>
        <taxon>Euteleostomi</taxon>
        <taxon>Mammalia</taxon>
        <taxon>Eutheria</taxon>
        <taxon>Euarchontoglires</taxon>
        <taxon>Glires</taxon>
        <taxon>Rodentia</taxon>
        <taxon>Myomorpha</taxon>
        <taxon>Muroidea</taxon>
        <taxon>Muridae</taxon>
        <taxon>Murinae</taxon>
        <taxon>Mus</taxon>
        <taxon>Mus</taxon>
    </lineage>
</organism>
<sequence>MLLYRGAPAGPGTPGGGLARAGSVPQAFRIRLSTMSPRYLQSNSSSHTRPFSAIAELLDNAVDPDVSARTVFIDVEEVKKKPCLTFTDDGCGMTPHKLHRMLSFGFTDKVIKKSQRPIGVFGNGFKSGSMRLGKDALVFTKNGNTLAVGLLSQTYLECIQAQAVIVPIVPFSQQNKKMIVTEDSLPSLEAILNYSIFNCEKDLLSQFDAIPGKKGTRVLIWNIRRNKDGKSELDFDTDQYDILVSDFDAEEKEIGGVTSELPETEYSLRAFCSILYMKPRMKIFLRQKKVTTQMIAKSLANVEYDIYKPTSTNKQVRITFGFSCKYHNQFGVMMYHNNRLIKAFEKAGCQLKPTCGEGVGVIGVIECNFLKPAYNKQDFEYTKEYRLTINALARKLNAYWKEKISQENFEPLPTSRRIPDQTWVQCDECLKWRRLPGMVDPSTLPARWFCYYNPHPKFKRCSVPEEQERIDEDLHRSKAKQQVEAAEKKQKPMESDKYQVFSNPPKTPPLQDMAELNDKTIGYEQINSPSLLPSVREESRSPPRLKSLDSSAFQISRKYKLILGEEPVEKRRKIQTEMPLSPIDYSMSGFYRRVEAATAYPEGENSPDKCSSERSTPPHLIPEYPESNKHTEENREAPALCPGSQDQDQGFLLPEELEDQMPKLVAEESNRSSENIDKDMNKGPFVAVVGVAKGVADSGAPIQLVPFNREEFVGKRKRAESWKRANPYSSAAPAATAGKGKDCQDSRSRNMPKIKTPKESEELKRTTEKLERVLAERNLFQQKVEELEQEKNHWHSEYKKAQHELVTYSTQETEGIYWSKKHMGYRQAEFQILKAELERTKEEKQELKEKLKETESHLEVLQKAQVSFRNPEGDDLERALARLTRLRVHVSYLLTSVLPHLELREIGYDSEQVDGILYTVLEANHILD</sequence>
<protein>
    <recommendedName>
        <fullName>MORC family CW-type zinc finger protein 4</fullName>
    </recommendedName>
    <alternativeName>
        <fullName>Zinc finger CW-type coiled-coil domain protein 2</fullName>
    </alternativeName>
</protein>
<evidence type="ECO:0000250" key="1">
    <source>
        <dbReference type="UniProtKB" id="Q8TE76"/>
    </source>
</evidence>
<evidence type="ECO:0000255" key="2"/>
<evidence type="ECO:0000255" key="3">
    <source>
        <dbReference type="PROSITE-ProRule" id="PRU00454"/>
    </source>
</evidence>
<evidence type="ECO:0000256" key="4">
    <source>
        <dbReference type="SAM" id="MobiDB-lite"/>
    </source>
</evidence>
<evidence type="ECO:0000303" key="5">
    <source>
    </source>
</evidence>
<evidence type="ECO:0000303" key="6">
    <source>
    </source>
</evidence>
<evidence type="ECO:0000305" key="7"/>
<comment type="function">
    <text evidence="1">Histone methylation reader which binds to non-methylated (H3K4me0), monomethylated (H3K4me1), dimethylated (H3K4me2) and trimethylated (H3K4me3) 'Lys-4' on histone H3 (By similarity). The order of binding preference is H3K4me3 &gt; H3K4me2 &gt; H3K4me1 &gt; H3K4me0 (By similarity).</text>
</comment>
<comment type="subcellular location">
    <subcellularLocation>
        <location evidence="1">Nucleus</location>
    </subcellularLocation>
</comment>
<comment type="alternative products">
    <event type="alternative splicing"/>
    <isoform>
        <id>Q8BMD7-1</id>
        <name>1</name>
        <sequence type="displayed"/>
    </isoform>
    <isoform>
        <id>Q8BMD7-2</id>
        <name>2</name>
        <sequence type="described" ref="VSP_015277 VSP_015278"/>
    </isoform>
</comment>
<comment type="domain">
    <text evidence="1">The CW-TYPE zinc finger mediates its binding to trimethylated histone H3K4me3.</text>
</comment>
<comment type="sequence caution" evidence="7">
    <conflict type="erroneous termination">
        <sequence resource="EMBL-CDS" id="AAH98483"/>
    </conflict>
    <text>Truncated C-terminus.</text>
</comment>
<comment type="sequence caution" evidence="7">
    <conflict type="miscellaneous discrepancy">
        <sequence resource="EMBL-CDS" id="AAH98483"/>
    </conflict>
    <text>Contaminating sequence. Potential poly-A sequence.</text>
</comment>
<comment type="sequence caution" evidence="7">
    <conflict type="erroneous initiation">
        <sequence resource="EMBL-CDS" id="BAB30759"/>
    </conflict>
</comment>